<name>APAG_SHELP</name>
<organism>
    <name type="scientific">Shewanella loihica (strain ATCC BAA-1088 / PV-4)</name>
    <dbReference type="NCBI Taxonomy" id="323850"/>
    <lineage>
        <taxon>Bacteria</taxon>
        <taxon>Pseudomonadati</taxon>
        <taxon>Pseudomonadota</taxon>
        <taxon>Gammaproteobacteria</taxon>
        <taxon>Alteromonadales</taxon>
        <taxon>Shewanellaceae</taxon>
        <taxon>Shewanella</taxon>
    </lineage>
</organism>
<evidence type="ECO:0000255" key="1">
    <source>
        <dbReference type="HAMAP-Rule" id="MF_00791"/>
    </source>
</evidence>
<gene>
    <name evidence="1" type="primary">apaG</name>
    <name type="ordered locus">Shew_0878</name>
</gene>
<sequence>MKQLESSIRIEVKTDYIEEQSSPEEERYLFSYTITIINLGDEAVTLKSRMWCITDANGHESKVEGAGVVGETPTIKPNTAYQYTSGTVCETPFAVMQGYYVMVTEQGETFKAPIAPFRLAAPGLLH</sequence>
<protein>
    <recommendedName>
        <fullName evidence="1">Protein ApaG</fullName>
    </recommendedName>
</protein>
<keyword id="KW-1185">Reference proteome</keyword>
<dbReference type="EMBL" id="CP000606">
    <property type="protein sequence ID" value="ABO22750.1"/>
    <property type="molecule type" value="Genomic_DNA"/>
</dbReference>
<dbReference type="RefSeq" id="WP_011864684.1">
    <property type="nucleotide sequence ID" value="NC_009092.1"/>
</dbReference>
<dbReference type="SMR" id="A3QBA2"/>
<dbReference type="STRING" id="323850.Shew_0878"/>
<dbReference type="KEGG" id="slo:Shew_0878"/>
<dbReference type="eggNOG" id="COG2967">
    <property type="taxonomic scope" value="Bacteria"/>
</dbReference>
<dbReference type="HOGENOM" id="CLU_128074_0_0_6"/>
<dbReference type="OrthoDB" id="9795226at2"/>
<dbReference type="Proteomes" id="UP000001558">
    <property type="component" value="Chromosome"/>
</dbReference>
<dbReference type="Gene3D" id="2.60.40.1470">
    <property type="entry name" value="ApaG domain"/>
    <property type="match status" value="1"/>
</dbReference>
<dbReference type="HAMAP" id="MF_00791">
    <property type="entry name" value="ApaG"/>
    <property type="match status" value="1"/>
</dbReference>
<dbReference type="InterPro" id="IPR050718">
    <property type="entry name" value="ApaG-like"/>
</dbReference>
<dbReference type="InterPro" id="IPR007474">
    <property type="entry name" value="ApaG_domain"/>
</dbReference>
<dbReference type="InterPro" id="IPR036767">
    <property type="entry name" value="ApaG_sf"/>
</dbReference>
<dbReference type="InterPro" id="IPR023065">
    <property type="entry name" value="Uncharacterised_ApaG"/>
</dbReference>
<dbReference type="NCBIfam" id="NF003967">
    <property type="entry name" value="PRK05461.1"/>
    <property type="match status" value="1"/>
</dbReference>
<dbReference type="PANTHER" id="PTHR47191">
    <property type="entry name" value="OS05G0170800 PROTEIN"/>
    <property type="match status" value="1"/>
</dbReference>
<dbReference type="PANTHER" id="PTHR47191:SF2">
    <property type="entry name" value="OS05G0170800 PROTEIN"/>
    <property type="match status" value="1"/>
</dbReference>
<dbReference type="Pfam" id="PF04379">
    <property type="entry name" value="DUF525"/>
    <property type="match status" value="1"/>
</dbReference>
<dbReference type="SUPFAM" id="SSF110069">
    <property type="entry name" value="ApaG-like"/>
    <property type="match status" value="1"/>
</dbReference>
<dbReference type="PROSITE" id="PS51087">
    <property type="entry name" value="APAG"/>
    <property type="match status" value="1"/>
</dbReference>
<reference key="1">
    <citation type="submission" date="2007-03" db="EMBL/GenBank/DDBJ databases">
        <title>Complete sequence of Shewanella loihica PV-4.</title>
        <authorList>
            <consortium name="US DOE Joint Genome Institute"/>
            <person name="Copeland A."/>
            <person name="Lucas S."/>
            <person name="Lapidus A."/>
            <person name="Barry K."/>
            <person name="Detter J.C."/>
            <person name="Glavina del Rio T."/>
            <person name="Hammon N."/>
            <person name="Israni S."/>
            <person name="Dalin E."/>
            <person name="Tice H."/>
            <person name="Pitluck S."/>
            <person name="Chain P."/>
            <person name="Malfatti S."/>
            <person name="Shin M."/>
            <person name="Vergez L."/>
            <person name="Schmutz J."/>
            <person name="Larimer F."/>
            <person name="Land M."/>
            <person name="Hauser L."/>
            <person name="Kyrpides N."/>
            <person name="Mikhailova N."/>
            <person name="Romine M.F."/>
            <person name="Serres G."/>
            <person name="Fredrickson J."/>
            <person name="Tiedje J."/>
            <person name="Richardson P."/>
        </authorList>
    </citation>
    <scope>NUCLEOTIDE SEQUENCE [LARGE SCALE GENOMIC DNA]</scope>
    <source>
        <strain>ATCC BAA-1088 / PV-4</strain>
    </source>
</reference>
<feature type="chain" id="PRO_1000083651" description="Protein ApaG">
    <location>
        <begin position="1"/>
        <end position="126"/>
    </location>
</feature>
<feature type="domain" description="ApaG" evidence="1">
    <location>
        <begin position="2"/>
        <end position="126"/>
    </location>
</feature>
<accession>A3QBA2</accession>
<proteinExistence type="inferred from homology"/>